<evidence type="ECO:0000255" key="1">
    <source>
        <dbReference type="HAMAP-Rule" id="MF_00501"/>
    </source>
</evidence>
<evidence type="ECO:0000305" key="2"/>
<comment type="function">
    <text evidence="1">Binds the 23S rRNA.</text>
</comment>
<comment type="cofactor">
    <cofactor evidence="1">
        <name>Zn(2+)</name>
        <dbReference type="ChEBI" id="CHEBI:29105"/>
    </cofactor>
    <text evidence="1">Binds 1 zinc ion per subunit.</text>
</comment>
<comment type="subunit">
    <text evidence="1">Part of the 50S ribosomal subunit.</text>
</comment>
<comment type="similarity">
    <text evidence="1">Belongs to the bacterial ribosomal protein bL31 family. Type A subfamily.</text>
</comment>
<reference key="1">
    <citation type="submission" date="2006-12" db="EMBL/GenBank/DDBJ databases">
        <title>Complete sequence of Mycobacterium vanbaalenii PYR-1.</title>
        <authorList>
            <consortium name="US DOE Joint Genome Institute"/>
            <person name="Copeland A."/>
            <person name="Lucas S."/>
            <person name="Lapidus A."/>
            <person name="Barry K."/>
            <person name="Detter J.C."/>
            <person name="Glavina del Rio T."/>
            <person name="Hammon N."/>
            <person name="Israni S."/>
            <person name="Dalin E."/>
            <person name="Tice H."/>
            <person name="Pitluck S."/>
            <person name="Singan V."/>
            <person name="Schmutz J."/>
            <person name="Larimer F."/>
            <person name="Land M."/>
            <person name="Hauser L."/>
            <person name="Kyrpides N."/>
            <person name="Anderson I.J."/>
            <person name="Miller C."/>
            <person name="Richardson P."/>
        </authorList>
    </citation>
    <scope>NUCLEOTIDE SEQUENCE [LARGE SCALE GENOMIC DNA]</scope>
    <source>
        <strain>DSM 7251 / JCM 13017 / BCRC 16820 / KCTC 9966 / NRRL B-24157 / PYR-1</strain>
    </source>
</reference>
<organism>
    <name type="scientific">Mycolicibacterium vanbaalenii (strain DSM 7251 / JCM 13017 / BCRC 16820 / KCTC 9966 / NRRL B-24157 / PYR-1)</name>
    <name type="common">Mycobacterium vanbaalenii</name>
    <dbReference type="NCBI Taxonomy" id="350058"/>
    <lineage>
        <taxon>Bacteria</taxon>
        <taxon>Bacillati</taxon>
        <taxon>Actinomycetota</taxon>
        <taxon>Actinomycetes</taxon>
        <taxon>Mycobacteriales</taxon>
        <taxon>Mycobacteriaceae</taxon>
        <taxon>Mycolicibacterium</taxon>
    </lineage>
</organism>
<keyword id="KW-0479">Metal-binding</keyword>
<keyword id="KW-0687">Ribonucleoprotein</keyword>
<keyword id="KW-0689">Ribosomal protein</keyword>
<keyword id="KW-0694">RNA-binding</keyword>
<keyword id="KW-0699">rRNA-binding</keyword>
<keyword id="KW-0862">Zinc</keyword>
<sequence length="74" mass="8176">MKSGIHPDYVETTVLCGCGASFTTRSTKQSGQITVEVCSQCHPFYTGKQKILDSGGRVARFEKRYGKRKTTADK</sequence>
<feature type="chain" id="PRO_1000126672" description="Large ribosomal subunit protein bL31">
    <location>
        <begin position="1"/>
        <end position="74"/>
    </location>
</feature>
<feature type="binding site" evidence="1">
    <location>
        <position position="16"/>
    </location>
    <ligand>
        <name>Zn(2+)</name>
        <dbReference type="ChEBI" id="CHEBI:29105"/>
    </ligand>
</feature>
<feature type="binding site" evidence="1">
    <location>
        <position position="18"/>
    </location>
    <ligand>
        <name>Zn(2+)</name>
        <dbReference type="ChEBI" id="CHEBI:29105"/>
    </ligand>
</feature>
<feature type="binding site" evidence="1">
    <location>
        <position position="38"/>
    </location>
    <ligand>
        <name>Zn(2+)</name>
        <dbReference type="ChEBI" id="CHEBI:29105"/>
    </ligand>
</feature>
<feature type="binding site" evidence="1">
    <location>
        <position position="41"/>
    </location>
    <ligand>
        <name>Zn(2+)</name>
        <dbReference type="ChEBI" id="CHEBI:29105"/>
    </ligand>
</feature>
<proteinExistence type="inferred from homology"/>
<gene>
    <name evidence="1" type="primary">rpmE</name>
    <name type="ordered locus">Mvan_4340</name>
</gene>
<dbReference type="EMBL" id="CP000511">
    <property type="protein sequence ID" value="ABM15117.1"/>
    <property type="molecule type" value="Genomic_DNA"/>
</dbReference>
<dbReference type="RefSeq" id="WP_011781495.1">
    <property type="nucleotide sequence ID" value="NZ_JACKSD010000061.1"/>
</dbReference>
<dbReference type="SMR" id="A1TD67"/>
<dbReference type="STRING" id="350058.Mvan_4340"/>
<dbReference type="KEGG" id="mva:Mvan_4340"/>
<dbReference type="eggNOG" id="COG0254">
    <property type="taxonomic scope" value="Bacteria"/>
</dbReference>
<dbReference type="HOGENOM" id="CLU_114306_4_3_11"/>
<dbReference type="Proteomes" id="UP000009159">
    <property type="component" value="Chromosome"/>
</dbReference>
<dbReference type="GO" id="GO:1990904">
    <property type="term" value="C:ribonucleoprotein complex"/>
    <property type="evidence" value="ECO:0007669"/>
    <property type="project" value="UniProtKB-KW"/>
</dbReference>
<dbReference type="GO" id="GO:0005840">
    <property type="term" value="C:ribosome"/>
    <property type="evidence" value="ECO:0007669"/>
    <property type="project" value="UniProtKB-KW"/>
</dbReference>
<dbReference type="GO" id="GO:0046872">
    <property type="term" value="F:metal ion binding"/>
    <property type="evidence" value="ECO:0007669"/>
    <property type="project" value="UniProtKB-KW"/>
</dbReference>
<dbReference type="GO" id="GO:0019843">
    <property type="term" value="F:rRNA binding"/>
    <property type="evidence" value="ECO:0007669"/>
    <property type="project" value="UniProtKB-KW"/>
</dbReference>
<dbReference type="GO" id="GO:0003735">
    <property type="term" value="F:structural constituent of ribosome"/>
    <property type="evidence" value="ECO:0007669"/>
    <property type="project" value="InterPro"/>
</dbReference>
<dbReference type="GO" id="GO:0006412">
    <property type="term" value="P:translation"/>
    <property type="evidence" value="ECO:0007669"/>
    <property type="project" value="UniProtKB-UniRule"/>
</dbReference>
<dbReference type="Gene3D" id="4.10.830.30">
    <property type="entry name" value="Ribosomal protein L31"/>
    <property type="match status" value="1"/>
</dbReference>
<dbReference type="HAMAP" id="MF_00501">
    <property type="entry name" value="Ribosomal_bL31_1"/>
    <property type="match status" value="1"/>
</dbReference>
<dbReference type="InterPro" id="IPR034704">
    <property type="entry name" value="Ribosomal_bL28/bL31-like_sf"/>
</dbReference>
<dbReference type="InterPro" id="IPR002150">
    <property type="entry name" value="Ribosomal_bL31"/>
</dbReference>
<dbReference type="InterPro" id="IPR027491">
    <property type="entry name" value="Ribosomal_bL31_A"/>
</dbReference>
<dbReference type="InterPro" id="IPR042105">
    <property type="entry name" value="Ribosomal_bL31_sf"/>
</dbReference>
<dbReference type="NCBIfam" id="TIGR00105">
    <property type="entry name" value="L31"/>
    <property type="match status" value="1"/>
</dbReference>
<dbReference type="NCBIfam" id="NF000612">
    <property type="entry name" value="PRK00019.1"/>
    <property type="match status" value="1"/>
</dbReference>
<dbReference type="NCBIfam" id="NF001809">
    <property type="entry name" value="PRK00528.1"/>
    <property type="match status" value="1"/>
</dbReference>
<dbReference type="PANTHER" id="PTHR33280">
    <property type="entry name" value="50S RIBOSOMAL PROTEIN L31, CHLOROPLASTIC"/>
    <property type="match status" value="1"/>
</dbReference>
<dbReference type="PANTHER" id="PTHR33280:SF1">
    <property type="entry name" value="LARGE RIBOSOMAL SUBUNIT PROTEIN BL31C"/>
    <property type="match status" value="1"/>
</dbReference>
<dbReference type="Pfam" id="PF01197">
    <property type="entry name" value="Ribosomal_L31"/>
    <property type="match status" value="1"/>
</dbReference>
<dbReference type="PRINTS" id="PR01249">
    <property type="entry name" value="RIBOSOMALL31"/>
</dbReference>
<dbReference type="SUPFAM" id="SSF143800">
    <property type="entry name" value="L28p-like"/>
    <property type="match status" value="1"/>
</dbReference>
<dbReference type="PROSITE" id="PS01143">
    <property type="entry name" value="RIBOSOMAL_L31"/>
    <property type="match status" value="1"/>
</dbReference>
<accession>A1TD67</accession>
<protein>
    <recommendedName>
        <fullName evidence="1">Large ribosomal subunit protein bL31</fullName>
    </recommendedName>
    <alternativeName>
        <fullName evidence="2">50S ribosomal protein L31</fullName>
    </alternativeName>
</protein>
<name>RL31_MYCVP</name>